<evidence type="ECO:0000305" key="1"/>
<feature type="chain" id="PRO_0000160930" description="Zinc-type alcohol dehydrogenase-like protein SAS2087">
    <location>
        <begin position="1"/>
        <end position="335"/>
    </location>
</feature>
<gene>
    <name type="ordered locus">SAS2087</name>
</gene>
<keyword id="KW-0479">Metal-binding</keyword>
<keyword id="KW-0560">Oxidoreductase</keyword>
<keyword id="KW-0862">Zinc</keyword>
<reference key="1">
    <citation type="journal article" date="2004" name="Proc. Natl. Acad. Sci. U.S.A.">
        <title>Complete genomes of two clinical Staphylococcus aureus strains: evidence for the rapid evolution of virulence and drug resistance.</title>
        <authorList>
            <person name="Holden M.T.G."/>
            <person name="Feil E.J."/>
            <person name="Lindsay J.A."/>
            <person name="Peacock S.J."/>
            <person name="Day N.P.J."/>
            <person name="Enright M.C."/>
            <person name="Foster T.J."/>
            <person name="Moore C.E."/>
            <person name="Hurst L."/>
            <person name="Atkin R."/>
            <person name="Barron A."/>
            <person name="Bason N."/>
            <person name="Bentley S.D."/>
            <person name="Chillingworth C."/>
            <person name="Chillingworth T."/>
            <person name="Churcher C."/>
            <person name="Clark L."/>
            <person name="Corton C."/>
            <person name="Cronin A."/>
            <person name="Doggett J."/>
            <person name="Dowd L."/>
            <person name="Feltwell T."/>
            <person name="Hance Z."/>
            <person name="Harris B."/>
            <person name="Hauser H."/>
            <person name="Holroyd S."/>
            <person name="Jagels K."/>
            <person name="James K.D."/>
            <person name="Lennard N."/>
            <person name="Line A."/>
            <person name="Mayes R."/>
            <person name="Moule S."/>
            <person name="Mungall K."/>
            <person name="Ormond D."/>
            <person name="Quail M.A."/>
            <person name="Rabbinowitsch E."/>
            <person name="Rutherford K.M."/>
            <person name="Sanders M."/>
            <person name="Sharp S."/>
            <person name="Simmonds M."/>
            <person name="Stevens K."/>
            <person name="Whitehead S."/>
            <person name="Barrell B.G."/>
            <person name="Spratt B.G."/>
            <person name="Parkhill J."/>
        </authorList>
    </citation>
    <scope>NUCLEOTIDE SEQUENCE [LARGE SCALE GENOMIC DNA]</scope>
    <source>
        <strain>MSSA476</strain>
    </source>
</reference>
<accession>Q6G7C8</accession>
<name>ZDH1_STAAS</name>
<proteinExistence type="inferred from homology"/>
<protein>
    <recommendedName>
        <fullName>Zinc-type alcohol dehydrogenase-like protein SAS2087</fullName>
    </recommendedName>
</protein>
<dbReference type="EMBL" id="BX571857">
    <property type="protein sequence ID" value="CAG43895.1"/>
    <property type="molecule type" value="Genomic_DNA"/>
</dbReference>
<dbReference type="RefSeq" id="WP_000781934.1">
    <property type="nucleotide sequence ID" value="NC_002953.3"/>
</dbReference>
<dbReference type="SMR" id="Q6G7C8"/>
<dbReference type="KEGG" id="sas:SAS2087"/>
<dbReference type="HOGENOM" id="CLU_026673_3_0_9"/>
<dbReference type="GO" id="GO:0016491">
    <property type="term" value="F:oxidoreductase activity"/>
    <property type="evidence" value="ECO:0007669"/>
    <property type="project" value="UniProtKB-KW"/>
</dbReference>
<dbReference type="GO" id="GO:0008270">
    <property type="term" value="F:zinc ion binding"/>
    <property type="evidence" value="ECO:0007669"/>
    <property type="project" value="InterPro"/>
</dbReference>
<dbReference type="CDD" id="cd08252">
    <property type="entry name" value="AL_MDR"/>
    <property type="match status" value="1"/>
</dbReference>
<dbReference type="Gene3D" id="3.90.180.10">
    <property type="entry name" value="Medium-chain alcohol dehydrogenases, catalytic domain"/>
    <property type="match status" value="1"/>
</dbReference>
<dbReference type="Gene3D" id="3.40.50.720">
    <property type="entry name" value="NAD(P)-binding Rossmann-like Domain"/>
    <property type="match status" value="1"/>
</dbReference>
<dbReference type="InterPro" id="IPR013149">
    <property type="entry name" value="ADH-like_C"/>
</dbReference>
<dbReference type="InterPro" id="IPR013154">
    <property type="entry name" value="ADH-like_N"/>
</dbReference>
<dbReference type="InterPro" id="IPR014182">
    <property type="entry name" value="ADH_Zn_typ-1"/>
</dbReference>
<dbReference type="InterPro" id="IPR011032">
    <property type="entry name" value="GroES-like_sf"/>
</dbReference>
<dbReference type="InterPro" id="IPR036291">
    <property type="entry name" value="NAD(P)-bd_dom_sf"/>
</dbReference>
<dbReference type="InterPro" id="IPR020843">
    <property type="entry name" value="PKS_ER"/>
</dbReference>
<dbReference type="InterPro" id="IPR002364">
    <property type="entry name" value="Quin_OxRdtase/zeta-crystal_CS"/>
</dbReference>
<dbReference type="InterPro" id="IPR050700">
    <property type="entry name" value="YIM1/Zinc_Alcohol_DH_Fams"/>
</dbReference>
<dbReference type="NCBIfam" id="TIGR02817">
    <property type="entry name" value="adh_fam_1"/>
    <property type="match status" value="1"/>
</dbReference>
<dbReference type="PANTHER" id="PTHR11695">
    <property type="entry name" value="ALCOHOL DEHYDROGENASE RELATED"/>
    <property type="match status" value="1"/>
</dbReference>
<dbReference type="PANTHER" id="PTHR11695:SF294">
    <property type="entry name" value="RETICULON-4-INTERACTING PROTEIN 1, MITOCHONDRIAL"/>
    <property type="match status" value="1"/>
</dbReference>
<dbReference type="Pfam" id="PF08240">
    <property type="entry name" value="ADH_N"/>
    <property type="match status" value="1"/>
</dbReference>
<dbReference type="Pfam" id="PF00107">
    <property type="entry name" value="ADH_zinc_N"/>
    <property type="match status" value="1"/>
</dbReference>
<dbReference type="SMART" id="SM00829">
    <property type="entry name" value="PKS_ER"/>
    <property type="match status" value="1"/>
</dbReference>
<dbReference type="SUPFAM" id="SSF50129">
    <property type="entry name" value="GroES-like"/>
    <property type="match status" value="1"/>
</dbReference>
<dbReference type="SUPFAM" id="SSF51735">
    <property type="entry name" value="NAD(P)-binding Rossmann-fold domains"/>
    <property type="match status" value="1"/>
</dbReference>
<dbReference type="PROSITE" id="PS01162">
    <property type="entry name" value="QOR_ZETA_CRYSTAL"/>
    <property type="match status" value="1"/>
</dbReference>
<sequence length="335" mass="37563">MKMIGFEKPFKLEEGNLFKVYEQRKPTPENDDILVKVNSISVNPVDTKQRQMEVTQAPRVLGFDAIGTVEAIGPDVTLFSPGDVVFYAGSPNRQGSNATYQLVSEAIVAKAPHNISANEAVSLPLTGITAYETFFDTFKISHNPAENEGKSVLIINGAGGVGSIATQIAKRYGLTVITTASRQETTEWCEKMGADIVLNHKEDLVRQFKEKEIPLVDYIFCTYNTDLYYNTMIELIKPLGHITTIVAFNEDQDLNALKLKSITFTHEFMFARPIHRTPDMIKQHEYLEDITKNIESGHYQPTTTQVFEGLSPENLYQAHQLLEKQSMIGKLVINI</sequence>
<organism>
    <name type="scientific">Staphylococcus aureus (strain MSSA476)</name>
    <dbReference type="NCBI Taxonomy" id="282459"/>
    <lineage>
        <taxon>Bacteria</taxon>
        <taxon>Bacillati</taxon>
        <taxon>Bacillota</taxon>
        <taxon>Bacilli</taxon>
        <taxon>Bacillales</taxon>
        <taxon>Staphylococcaceae</taxon>
        <taxon>Staphylococcus</taxon>
    </lineage>
</organism>
<comment type="similarity">
    <text evidence="1">Belongs to the zinc-containing alcohol dehydrogenase family. Quinone oxidoreductase subfamily.</text>
</comment>